<organism>
    <name type="scientific">Mycobacterium avium (strain 104)</name>
    <dbReference type="NCBI Taxonomy" id="243243"/>
    <lineage>
        <taxon>Bacteria</taxon>
        <taxon>Bacillati</taxon>
        <taxon>Actinomycetota</taxon>
        <taxon>Actinomycetes</taxon>
        <taxon>Mycobacteriales</taxon>
        <taxon>Mycobacteriaceae</taxon>
        <taxon>Mycobacterium</taxon>
        <taxon>Mycobacterium avium complex (MAC)</taxon>
    </lineage>
</organism>
<dbReference type="EMBL" id="CP000479">
    <property type="protein sequence ID" value="ABK68861.1"/>
    <property type="molecule type" value="Genomic_DNA"/>
</dbReference>
<dbReference type="RefSeq" id="WP_003874730.1">
    <property type="nucleotide sequence ID" value="NC_008595.1"/>
</dbReference>
<dbReference type="SMR" id="A0Q8Y7"/>
<dbReference type="GeneID" id="77299268"/>
<dbReference type="KEGG" id="mav:MAV_0076"/>
<dbReference type="HOGENOM" id="CLU_148710_2_2_11"/>
<dbReference type="Proteomes" id="UP000001574">
    <property type="component" value="Chromosome"/>
</dbReference>
<dbReference type="GO" id="GO:0022627">
    <property type="term" value="C:cytosolic small ribosomal subunit"/>
    <property type="evidence" value="ECO:0007669"/>
    <property type="project" value="TreeGrafter"/>
</dbReference>
<dbReference type="GO" id="GO:0070181">
    <property type="term" value="F:small ribosomal subunit rRNA binding"/>
    <property type="evidence" value="ECO:0007669"/>
    <property type="project" value="TreeGrafter"/>
</dbReference>
<dbReference type="GO" id="GO:0003735">
    <property type="term" value="F:structural constituent of ribosome"/>
    <property type="evidence" value="ECO:0007669"/>
    <property type="project" value="InterPro"/>
</dbReference>
<dbReference type="GO" id="GO:0006412">
    <property type="term" value="P:translation"/>
    <property type="evidence" value="ECO:0007669"/>
    <property type="project" value="UniProtKB-UniRule"/>
</dbReference>
<dbReference type="FunFam" id="4.10.640.10:FF:000004">
    <property type="entry name" value="30S ribosomal protein S18"/>
    <property type="match status" value="1"/>
</dbReference>
<dbReference type="Gene3D" id="4.10.640.10">
    <property type="entry name" value="Ribosomal protein S18"/>
    <property type="match status" value="1"/>
</dbReference>
<dbReference type="HAMAP" id="MF_00270">
    <property type="entry name" value="Ribosomal_bS18"/>
    <property type="match status" value="1"/>
</dbReference>
<dbReference type="InterPro" id="IPR001648">
    <property type="entry name" value="Ribosomal_bS18"/>
</dbReference>
<dbReference type="InterPro" id="IPR018275">
    <property type="entry name" value="Ribosomal_bS18_CS"/>
</dbReference>
<dbReference type="InterPro" id="IPR036870">
    <property type="entry name" value="Ribosomal_bS18_sf"/>
</dbReference>
<dbReference type="NCBIfam" id="TIGR00165">
    <property type="entry name" value="S18"/>
    <property type="match status" value="1"/>
</dbReference>
<dbReference type="PANTHER" id="PTHR13479">
    <property type="entry name" value="30S RIBOSOMAL PROTEIN S18"/>
    <property type="match status" value="1"/>
</dbReference>
<dbReference type="PANTHER" id="PTHR13479:SF62">
    <property type="entry name" value="SMALL RIBOSOMAL SUBUNIT PROTEIN BS18A"/>
    <property type="match status" value="1"/>
</dbReference>
<dbReference type="Pfam" id="PF01084">
    <property type="entry name" value="Ribosomal_S18"/>
    <property type="match status" value="1"/>
</dbReference>
<dbReference type="PRINTS" id="PR00974">
    <property type="entry name" value="RIBOSOMALS18"/>
</dbReference>
<dbReference type="SUPFAM" id="SSF46911">
    <property type="entry name" value="Ribosomal protein S18"/>
    <property type="match status" value="1"/>
</dbReference>
<dbReference type="PROSITE" id="PS00057">
    <property type="entry name" value="RIBOSOMAL_S18"/>
    <property type="match status" value="1"/>
</dbReference>
<gene>
    <name evidence="1" type="primary">rpsR</name>
    <name type="ordered locus">MAV_0076</name>
</gene>
<comment type="function">
    <text evidence="1">Binds as a heterodimer with protein bS6 to the central domain of the 16S rRNA, where it helps stabilize the platform of the 30S subunit.</text>
</comment>
<comment type="subunit">
    <text evidence="1">Part of the 30S ribosomal subunit. Forms a tight heterodimer with protein bS6.</text>
</comment>
<comment type="similarity">
    <text evidence="1">Belongs to the bacterial ribosomal protein bS18 family.</text>
</comment>
<proteinExistence type="inferred from homology"/>
<feature type="chain" id="PRO_1000003536" description="Small ribosomal subunit protein bS18">
    <location>
        <begin position="1"/>
        <end position="84"/>
    </location>
</feature>
<evidence type="ECO:0000255" key="1">
    <source>
        <dbReference type="HAMAP-Rule" id="MF_00270"/>
    </source>
</evidence>
<evidence type="ECO:0000305" key="2"/>
<protein>
    <recommendedName>
        <fullName evidence="1">Small ribosomal subunit protein bS18</fullName>
    </recommendedName>
    <alternativeName>
        <fullName evidence="2">30S ribosomal protein S18</fullName>
    </alternativeName>
</protein>
<reference key="1">
    <citation type="submission" date="2006-10" db="EMBL/GenBank/DDBJ databases">
        <authorList>
            <person name="Fleischmann R.D."/>
            <person name="Dodson R.J."/>
            <person name="Haft D.H."/>
            <person name="Merkel J.S."/>
            <person name="Nelson W.C."/>
            <person name="Fraser C.M."/>
        </authorList>
    </citation>
    <scope>NUCLEOTIDE SEQUENCE [LARGE SCALE GENOMIC DNA]</scope>
    <source>
        <strain>104</strain>
    </source>
</reference>
<sequence>MAKSNKRRPAPEKPVKARKCVFCAKKDQAIDYKDTALLRTYISERGKIRARRVTGNCVQHQRDIAIAVKNAREVALLPFTSSAR</sequence>
<name>RS18_MYCA1</name>
<accession>A0Q8Y7</accession>
<keyword id="KW-0687">Ribonucleoprotein</keyword>
<keyword id="KW-0689">Ribosomal protein</keyword>
<keyword id="KW-0694">RNA-binding</keyword>
<keyword id="KW-0699">rRNA-binding</keyword>